<sequence length="417" mass="47507">MAEIKNYTLNFGPQHPAAHGVLRLVLELDGEVIQRADPHIGLLHRATEKLAENKTFIQSVPYMDRLDYVSMMVNEHGYVLAIEKLLGIEVPERAQYIRVLFDEITRVLNHLMWIGAHALDVGAMAVFLYAFREREDLMDVYEAVSGARMHAAYYRPGGVYRDLPEAMPQYKASKIRNERALAKMNEARSGSVLDFIDDFFTRFPKCVDEYETLLTDNRIWKQRLVGIGVVSPERALQLGLTGPMIRGSGIAWDLRKKQPYEVYDRLDFDIPVGVNGDCYDRYLVRVEEMRQSTRIAKQCIEWLRKNPGPVITDNHKVAPPSRVGMKTNMEDLIHHFKLFTEGFHVPEGETYAAVEHPKGEFGIYLVSDGANKPYRLKIRAPGYAHLSALDEMARGHMIADAVTIIGTQDIVFGEIDR</sequence>
<evidence type="ECO:0000255" key="1">
    <source>
        <dbReference type="HAMAP-Rule" id="MF_01358"/>
    </source>
</evidence>
<feature type="chain" id="PRO_0000371830" description="NADH-quinone oxidoreductase subunit D">
    <location>
        <begin position="1"/>
        <end position="417"/>
    </location>
</feature>
<accession>A3MIA4</accession>
<protein>
    <recommendedName>
        <fullName evidence="1">NADH-quinone oxidoreductase subunit D</fullName>
        <ecNumber evidence="1">7.1.1.-</ecNumber>
    </recommendedName>
    <alternativeName>
        <fullName evidence="1">NADH dehydrogenase I subunit D</fullName>
    </alternativeName>
    <alternativeName>
        <fullName evidence="1">NDH-1 subunit D</fullName>
    </alternativeName>
</protein>
<organism>
    <name type="scientific">Burkholderia mallei (strain NCTC 10247)</name>
    <dbReference type="NCBI Taxonomy" id="320389"/>
    <lineage>
        <taxon>Bacteria</taxon>
        <taxon>Pseudomonadati</taxon>
        <taxon>Pseudomonadota</taxon>
        <taxon>Betaproteobacteria</taxon>
        <taxon>Burkholderiales</taxon>
        <taxon>Burkholderiaceae</taxon>
        <taxon>Burkholderia</taxon>
        <taxon>pseudomallei group</taxon>
    </lineage>
</organism>
<proteinExistence type="inferred from homology"/>
<comment type="function">
    <text evidence="1">NDH-1 shuttles electrons from NADH, via FMN and iron-sulfur (Fe-S) centers, to quinones in the respiratory chain. The immediate electron acceptor for the enzyme in this species is believed to be ubiquinone. Couples the redox reaction to proton translocation (for every two electrons transferred, four hydrogen ions are translocated across the cytoplasmic membrane), and thus conserves the redox energy in a proton gradient.</text>
</comment>
<comment type="catalytic activity">
    <reaction evidence="1">
        <text>a quinone + NADH + 5 H(+)(in) = a quinol + NAD(+) + 4 H(+)(out)</text>
        <dbReference type="Rhea" id="RHEA:57888"/>
        <dbReference type="ChEBI" id="CHEBI:15378"/>
        <dbReference type="ChEBI" id="CHEBI:24646"/>
        <dbReference type="ChEBI" id="CHEBI:57540"/>
        <dbReference type="ChEBI" id="CHEBI:57945"/>
        <dbReference type="ChEBI" id="CHEBI:132124"/>
    </reaction>
</comment>
<comment type="subunit">
    <text evidence="1">NDH-1 is composed of 14 different subunits. Subunits NuoB, C, D, E, F, and G constitute the peripheral sector of the complex.</text>
</comment>
<comment type="subcellular location">
    <subcellularLocation>
        <location evidence="1">Cell inner membrane</location>
        <topology evidence="1">Peripheral membrane protein</topology>
        <orientation evidence="1">Cytoplasmic side</orientation>
    </subcellularLocation>
</comment>
<comment type="similarity">
    <text evidence="1">Belongs to the complex I 49 kDa subunit family.</text>
</comment>
<dbReference type="EC" id="7.1.1.-" evidence="1"/>
<dbReference type="EMBL" id="CP000548">
    <property type="protein sequence ID" value="ABO06439.1"/>
    <property type="molecule type" value="Genomic_DNA"/>
</dbReference>
<dbReference type="RefSeq" id="WP_004185833.1">
    <property type="nucleotide sequence ID" value="NZ_CP007802.1"/>
</dbReference>
<dbReference type="SMR" id="A3MIA4"/>
<dbReference type="KEGG" id="bmaz:BM44_2595"/>
<dbReference type="KEGG" id="bmn:BMA10247_0416"/>
<dbReference type="PATRIC" id="fig|320389.8.peg.2929"/>
<dbReference type="GO" id="GO:0005886">
    <property type="term" value="C:plasma membrane"/>
    <property type="evidence" value="ECO:0007669"/>
    <property type="project" value="UniProtKB-SubCell"/>
</dbReference>
<dbReference type="GO" id="GO:0051287">
    <property type="term" value="F:NAD binding"/>
    <property type="evidence" value="ECO:0007669"/>
    <property type="project" value="InterPro"/>
</dbReference>
<dbReference type="GO" id="GO:0050136">
    <property type="term" value="F:NADH:ubiquinone reductase (non-electrogenic) activity"/>
    <property type="evidence" value="ECO:0007669"/>
    <property type="project" value="UniProtKB-UniRule"/>
</dbReference>
<dbReference type="GO" id="GO:0048038">
    <property type="term" value="F:quinone binding"/>
    <property type="evidence" value="ECO:0007669"/>
    <property type="project" value="UniProtKB-KW"/>
</dbReference>
<dbReference type="FunFam" id="1.10.645.10:FF:000005">
    <property type="entry name" value="NADH-quinone oxidoreductase subunit D"/>
    <property type="match status" value="1"/>
</dbReference>
<dbReference type="Gene3D" id="1.10.645.10">
    <property type="entry name" value="Cytochrome-c3 Hydrogenase, chain B"/>
    <property type="match status" value="1"/>
</dbReference>
<dbReference type="HAMAP" id="MF_01358">
    <property type="entry name" value="NDH1_NuoD"/>
    <property type="match status" value="1"/>
</dbReference>
<dbReference type="InterPro" id="IPR001135">
    <property type="entry name" value="NADH_Q_OxRdtase_suD"/>
</dbReference>
<dbReference type="InterPro" id="IPR014029">
    <property type="entry name" value="NADH_UbQ_OxRdtase_49kDa_CS"/>
</dbReference>
<dbReference type="InterPro" id="IPR022885">
    <property type="entry name" value="NDH1_su_D/H"/>
</dbReference>
<dbReference type="InterPro" id="IPR029014">
    <property type="entry name" value="NiFe-Hase_large"/>
</dbReference>
<dbReference type="NCBIfam" id="TIGR01962">
    <property type="entry name" value="NuoD"/>
    <property type="match status" value="1"/>
</dbReference>
<dbReference type="NCBIfam" id="NF004739">
    <property type="entry name" value="PRK06075.1"/>
    <property type="match status" value="1"/>
</dbReference>
<dbReference type="PANTHER" id="PTHR11993:SF10">
    <property type="entry name" value="NADH DEHYDROGENASE [UBIQUINONE] IRON-SULFUR PROTEIN 2, MITOCHONDRIAL"/>
    <property type="match status" value="1"/>
</dbReference>
<dbReference type="PANTHER" id="PTHR11993">
    <property type="entry name" value="NADH-UBIQUINONE OXIDOREDUCTASE 49 KDA SUBUNIT"/>
    <property type="match status" value="1"/>
</dbReference>
<dbReference type="Pfam" id="PF00346">
    <property type="entry name" value="Complex1_49kDa"/>
    <property type="match status" value="1"/>
</dbReference>
<dbReference type="SUPFAM" id="SSF56762">
    <property type="entry name" value="HydB/Nqo4-like"/>
    <property type="match status" value="1"/>
</dbReference>
<dbReference type="PROSITE" id="PS00535">
    <property type="entry name" value="COMPLEX1_49K"/>
    <property type="match status" value="1"/>
</dbReference>
<gene>
    <name evidence="1" type="primary">nuoD</name>
    <name type="ordered locus">BMA10247_0416</name>
</gene>
<keyword id="KW-0997">Cell inner membrane</keyword>
<keyword id="KW-1003">Cell membrane</keyword>
<keyword id="KW-0472">Membrane</keyword>
<keyword id="KW-0520">NAD</keyword>
<keyword id="KW-0874">Quinone</keyword>
<keyword id="KW-1278">Translocase</keyword>
<keyword id="KW-0813">Transport</keyword>
<keyword id="KW-0830">Ubiquinone</keyword>
<reference key="1">
    <citation type="journal article" date="2010" name="Genome Biol. Evol.">
        <title>Continuing evolution of Burkholderia mallei through genome reduction and large-scale rearrangements.</title>
        <authorList>
            <person name="Losada L."/>
            <person name="Ronning C.M."/>
            <person name="DeShazer D."/>
            <person name="Woods D."/>
            <person name="Fedorova N."/>
            <person name="Kim H.S."/>
            <person name="Shabalina S.A."/>
            <person name="Pearson T.R."/>
            <person name="Brinkac L."/>
            <person name="Tan P."/>
            <person name="Nandi T."/>
            <person name="Crabtree J."/>
            <person name="Badger J."/>
            <person name="Beckstrom-Sternberg S."/>
            <person name="Saqib M."/>
            <person name="Schutzer S.E."/>
            <person name="Keim P."/>
            <person name="Nierman W.C."/>
        </authorList>
    </citation>
    <scope>NUCLEOTIDE SEQUENCE [LARGE SCALE GENOMIC DNA]</scope>
    <source>
        <strain>NCTC 10247</strain>
    </source>
</reference>
<name>NUOD_BURM7</name>